<sequence length="524" mass="58608">MATAVWAAARLLRGSAALCARPKFGSPAHRRFSSGATYPNIPLSSPLPGVPKPIFATVDGQEKFETKVTTLDNGLRVASQNKFGQFCTLGILINSGSRYEAKYLSGIAHFLEKLAFSSTARFDSKDEILLTLEKHGGICDCQTSRDTTMYAVSADSKGLDTVVGLLADVVLHPRLTDEEIEMTRMAVQFELEDLNMRPDPEPLLTEMIHEAAFRENTVGLHRFCPVENIGKIDREVLHSYLKNYYTPDRMVLAGVGVEHEHLVECARKYLLGVQPAWGAPGAVWMLTAQWHSTRGGSSRWRETCQMSALRPPRFQSSHIYGGARELLLLEEDFIPFAVLNMMMGGGGSFSAGGPGKGMFSRLYLNVLNRHHWMYNATSYHHSYEDTGLLCIHASADPRQVREMVEIITKEFILMGRTVDLVELERAKTQLMSMLMMNLESRPVIFEDVGRQVLATHSRKLPHELCTLIRNVKPEDIKRVASKMLRGKPAVAALGDLTDLPTYEHIQAALSSRDGRLPRTYRLFR</sequence>
<accession>P20069</accession>
<name>MPPA_RAT</name>
<gene>
    <name type="primary">Pmpca</name>
    <name type="synonym">Mppa</name>
</gene>
<keyword id="KW-0903">Direct protein sequencing</keyword>
<keyword id="KW-0472">Membrane</keyword>
<keyword id="KW-0496">Mitochondrion</keyword>
<keyword id="KW-0999">Mitochondrion inner membrane</keyword>
<keyword id="KW-1185">Reference proteome</keyword>
<keyword id="KW-0809">Transit peptide</keyword>
<comment type="function">
    <text evidence="2">Substrate recognition and binding subunit of the essential mitochondrial processing protease (MPP), which cleaves the mitochondrial sequence off newly imported precursors proteins.</text>
</comment>
<comment type="subunit">
    <text evidence="1">Heterodimer of PMPCA (alpha) and PMPCB (beta) subunits, forming the mitochondrial processing protease (MPP) in which PMPCA is involved in substrate recognition and binding and PMPCB is the catalytic subunit.</text>
</comment>
<comment type="subcellular location">
    <subcellularLocation>
        <location evidence="4">Mitochondrion matrix</location>
    </subcellularLocation>
    <subcellularLocation>
        <location evidence="2">Mitochondrion inner membrane</location>
    </subcellularLocation>
</comment>
<comment type="similarity">
    <text evidence="5">Belongs to the peptidase M16 family.</text>
</comment>
<comment type="caution">
    <text evidence="5">Does not seem to have protease activity as it lacks the zinc-binding site.</text>
</comment>
<reference key="1">
    <citation type="journal article" date="1990" name="Proc. Natl. Acad. Sci. U.S.A.">
        <title>The general mitochondrial matrix processing protease from rat liver: structural characterization of the catalytic subunit.</title>
        <authorList>
            <person name="Kleiber J."/>
            <person name="Kalousek F."/>
            <person name="Swaroop M."/>
            <person name="Rosenberg L.E."/>
        </authorList>
    </citation>
    <scope>NUCLEOTIDE SEQUENCE [MRNA]</scope>
    <scope>PROTEIN SEQUENCE OF 33-44; 113-121; 188-202; 223-231; 235-242; 362-369 AND 486-511</scope>
    <scope>FUNCTION</scope>
    <scope>SUBCELLULAR LOCATION</scope>
    <source>
        <strain>Sprague-Dawley</strain>
        <tissue>Liver</tissue>
    </source>
</reference>
<protein>
    <recommendedName>
        <fullName>Mitochondrial-processing peptidase subunit alpha</fullName>
    </recommendedName>
    <alternativeName>
        <fullName>Alpha-MPP</fullName>
    </alternativeName>
    <alternativeName>
        <fullName evidence="5">Inactive zinc metalloprotease alpha</fullName>
    </alternativeName>
    <alternativeName>
        <fullName>P-55</fullName>
    </alternativeName>
</protein>
<dbReference type="EMBL" id="M57728">
    <property type="protein sequence ID" value="AAA41632.1"/>
    <property type="molecule type" value="mRNA"/>
</dbReference>
<dbReference type="PIR" id="A36205">
    <property type="entry name" value="A36205"/>
</dbReference>
<dbReference type="SMR" id="P20069"/>
<dbReference type="CORUM" id="P20069"/>
<dbReference type="FunCoup" id="P20069">
    <property type="interactions" value="3127"/>
</dbReference>
<dbReference type="IntAct" id="P20069">
    <property type="interactions" value="1"/>
</dbReference>
<dbReference type="STRING" id="10116.ENSRNOP00000037642"/>
<dbReference type="MEROPS" id="M16.P01"/>
<dbReference type="CarbonylDB" id="P20069"/>
<dbReference type="iPTMnet" id="P20069"/>
<dbReference type="PhosphoSitePlus" id="P20069"/>
<dbReference type="jPOST" id="P20069"/>
<dbReference type="PaxDb" id="10116-ENSRNOP00000037642"/>
<dbReference type="UCSC" id="RGD:727897">
    <property type="organism name" value="rat"/>
</dbReference>
<dbReference type="AGR" id="RGD:727897"/>
<dbReference type="RGD" id="727897">
    <property type="gene designation" value="Pmpca"/>
</dbReference>
<dbReference type="eggNOG" id="KOG2067">
    <property type="taxonomic scope" value="Eukaryota"/>
</dbReference>
<dbReference type="InParanoid" id="P20069"/>
<dbReference type="PhylomeDB" id="P20069"/>
<dbReference type="Reactome" id="R-RNO-8949664">
    <property type="pathway name" value="Processing of SMDT1"/>
</dbReference>
<dbReference type="Reactome" id="R-RNO-9837999">
    <property type="pathway name" value="Mitochondrial protein degradation"/>
</dbReference>
<dbReference type="PRO" id="PR:P20069"/>
<dbReference type="Proteomes" id="UP000002494">
    <property type="component" value="Unplaced"/>
</dbReference>
<dbReference type="GO" id="GO:0005743">
    <property type="term" value="C:mitochondrial inner membrane"/>
    <property type="evidence" value="ECO:0000250"/>
    <property type="project" value="UniProtKB"/>
</dbReference>
<dbReference type="GO" id="GO:0005759">
    <property type="term" value="C:mitochondrial matrix"/>
    <property type="evidence" value="ECO:0000304"/>
    <property type="project" value="RGD"/>
</dbReference>
<dbReference type="GO" id="GO:0005739">
    <property type="term" value="C:mitochondrion"/>
    <property type="evidence" value="ECO:0000318"/>
    <property type="project" value="GO_Central"/>
</dbReference>
<dbReference type="GO" id="GO:0004175">
    <property type="term" value="F:endopeptidase activity"/>
    <property type="evidence" value="ECO:0000314"/>
    <property type="project" value="RGD"/>
</dbReference>
<dbReference type="GO" id="GO:0046872">
    <property type="term" value="F:metal ion binding"/>
    <property type="evidence" value="ECO:0007669"/>
    <property type="project" value="InterPro"/>
</dbReference>
<dbReference type="GO" id="GO:0004222">
    <property type="term" value="F:metalloendopeptidase activity"/>
    <property type="evidence" value="ECO:0007669"/>
    <property type="project" value="InterPro"/>
</dbReference>
<dbReference type="GO" id="GO:0016485">
    <property type="term" value="P:protein processing"/>
    <property type="evidence" value="ECO:0000314"/>
    <property type="project" value="RGD"/>
</dbReference>
<dbReference type="GO" id="GO:0006627">
    <property type="term" value="P:protein processing involved in protein targeting to mitochondrion"/>
    <property type="evidence" value="ECO:0000250"/>
    <property type="project" value="UniProtKB"/>
</dbReference>
<dbReference type="FunFam" id="3.30.830.10:FF:000010">
    <property type="entry name" value="Mitochondrial-processing peptidase alpha subunit, mitochondrial"/>
    <property type="match status" value="1"/>
</dbReference>
<dbReference type="FunFam" id="3.30.830.10:FF:000014">
    <property type="entry name" value="Mitochondrial-processing peptidase alpha subunit, mitochondrial"/>
    <property type="match status" value="1"/>
</dbReference>
<dbReference type="Gene3D" id="3.30.830.10">
    <property type="entry name" value="Metalloenzyme, LuxS/M16 peptidase-like"/>
    <property type="match status" value="2"/>
</dbReference>
<dbReference type="InterPro" id="IPR011249">
    <property type="entry name" value="Metalloenz_LuxS/M16"/>
</dbReference>
<dbReference type="InterPro" id="IPR050361">
    <property type="entry name" value="MPP/UQCRC_Complex"/>
</dbReference>
<dbReference type="InterPro" id="IPR011765">
    <property type="entry name" value="Pept_M16_N"/>
</dbReference>
<dbReference type="InterPro" id="IPR001431">
    <property type="entry name" value="Pept_M16_Zn_BS"/>
</dbReference>
<dbReference type="InterPro" id="IPR007863">
    <property type="entry name" value="Peptidase_M16_C"/>
</dbReference>
<dbReference type="PANTHER" id="PTHR11851">
    <property type="entry name" value="METALLOPROTEASE"/>
    <property type="match status" value="1"/>
</dbReference>
<dbReference type="PANTHER" id="PTHR11851:SF49">
    <property type="entry name" value="MITOCHONDRIAL-PROCESSING PEPTIDASE SUBUNIT ALPHA"/>
    <property type="match status" value="1"/>
</dbReference>
<dbReference type="Pfam" id="PF00675">
    <property type="entry name" value="Peptidase_M16"/>
    <property type="match status" value="1"/>
</dbReference>
<dbReference type="Pfam" id="PF05193">
    <property type="entry name" value="Peptidase_M16_C"/>
    <property type="match status" value="1"/>
</dbReference>
<dbReference type="SUPFAM" id="SSF63411">
    <property type="entry name" value="LuxS/MPP-like metallohydrolase"/>
    <property type="match status" value="2"/>
</dbReference>
<dbReference type="PROSITE" id="PS00143">
    <property type="entry name" value="INSULINASE"/>
    <property type="match status" value="1"/>
</dbReference>
<feature type="transit peptide" description="Mitochondrion" evidence="4">
    <location>
        <begin position="1"/>
        <end position="32"/>
    </location>
</feature>
<feature type="chain" id="PRO_0000026769" description="Mitochondrial-processing peptidase subunit alpha">
    <location>
        <begin position="33"/>
        <end position="524"/>
    </location>
</feature>
<feature type="modified residue" description="N6-succinyllysine" evidence="3">
    <location>
        <position position="63"/>
    </location>
</feature>
<proteinExistence type="evidence at protein level"/>
<organism>
    <name type="scientific">Rattus norvegicus</name>
    <name type="common">Rat</name>
    <dbReference type="NCBI Taxonomy" id="10116"/>
    <lineage>
        <taxon>Eukaryota</taxon>
        <taxon>Metazoa</taxon>
        <taxon>Chordata</taxon>
        <taxon>Craniata</taxon>
        <taxon>Vertebrata</taxon>
        <taxon>Euteleostomi</taxon>
        <taxon>Mammalia</taxon>
        <taxon>Eutheria</taxon>
        <taxon>Euarchontoglires</taxon>
        <taxon>Glires</taxon>
        <taxon>Rodentia</taxon>
        <taxon>Myomorpha</taxon>
        <taxon>Muroidea</taxon>
        <taxon>Muridae</taxon>
        <taxon>Murinae</taxon>
        <taxon>Rattus</taxon>
    </lineage>
</organism>
<evidence type="ECO:0000250" key="1">
    <source>
        <dbReference type="UniProtKB" id="P11914"/>
    </source>
</evidence>
<evidence type="ECO:0000250" key="2">
    <source>
        <dbReference type="UniProtKB" id="Q10713"/>
    </source>
</evidence>
<evidence type="ECO:0000250" key="3">
    <source>
        <dbReference type="UniProtKB" id="Q9DC61"/>
    </source>
</evidence>
<evidence type="ECO:0000269" key="4">
    <source>
    </source>
</evidence>
<evidence type="ECO:0000305" key="5"/>